<accession>A0A221J5X6</accession>
<comment type="function">
    <text evidence="3 5">Iridoid synthase that catalyzes the first step in generation of the iridoid ring scaffold using the linear monoterpene (6E)-8-oxogeranial as substrate (PubMed:29091815). Iridoids comprise a large family of distinctive bicyclic monoterpenes that possess a wide range of pharmacological activities, including anticancer, anti-inflammatory, antifungal and antibacterial activities (Probable). Catalyzes the conversion of the linear monoterpene (6E)-8-oxogeranial to (S)-8-oxocitronellyl enol, a precursor of nepetalactones, which are metabolites that are both insect-repellent and have euphoric effect in cats (PubMed:29091815).</text>
</comment>
<comment type="catalytic activity">
    <reaction evidence="3">
        <text>(S)-8-oxocitronellyl enol + NADP(+) = (6E)-8-oxogeranial + NADPH + H(+)</text>
        <dbReference type="Rhea" id="RHEA:62592"/>
        <dbReference type="ChEBI" id="CHEBI:15378"/>
        <dbReference type="ChEBI" id="CHEBI:57783"/>
        <dbReference type="ChEBI" id="CHEBI:58349"/>
        <dbReference type="ChEBI" id="CHEBI:64239"/>
        <dbReference type="ChEBI" id="CHEBI:144481"/>
        <dbReference type="EC" id="1.3.1.122"/>
    </reaction>
    <physiologicalReaction direction="right-to-left" evidence="3">
        <dbReference type="Rhea" id="RHEA:62594"/>
    </physiologicalReaction>
</comment>
<comment type="catalytic activity">
    <reaction evidence="1">
        <text>(S)-8-oxocitronellyl enol + NAD(+) = (6E)-8-oxogeranial + NADH + H(+)</text>
        <dbReference type="Rhea" id="RHEA:62596"/>
        <dbReference type="ChEBI" id="CHEBI:15378"/>
        <dbReference type="ChEBI" id="CHEBI:57540"/>
        <dbReference type="ChEBI" id="CHEBI:57945"/>
        <dbReference type="ChEBI" id="CHEBI:64239"/>
        <dbReference type="ChEBI" id="CHEBI:144481"/>
        <dbReference type="EC" id="1.3.1.122"/>
    </reaction>
    <physiologicalReaction direction="right-to-left" evidence="1">
        <dbReference type="Rhea" id="RHEA:62598"/>
    </physiologicalReaction>
</comment>
<comment type="biophysicochemical properties">
    <kinetics>
        <KM evidence="3">7.3 uM for (6E)-8-oxogeranial</KM>
        <KM evidence="3">23.2 uM for NADPH</KM>
        <text evidence="3">kcat is 0.60 sec(-1) with (6E)-8-oxogeranial as substrate. kcat is 0.84 sec(-1) with NADPH as proton donor.</text>
    </kinetics>
</comment>
<comment type="similarity">
    <text evidence="5">Belongs to the short-chain dehydrogenases/reductases (SDR) family.</text>
</comment>
<sequence>MSLSWWRAGAAKKRMDDDESLLVKQQQQQCVALIVGVTGLVGNSLAEMLPLPDTPGGPWKVYGVARRARPSWNEDQPMTYISCDVSNTGEVEAKLSPLSDVTHIFYATWTSRSTEEENCEANGKMLKNVLDAMIPNCPNLKHICLQTGRFHYVASVVDWKINGSHDTPLTEDLPRLKTNNFYYTQEDILLEEVKRKEGLTWSVHRPGTIFGFSPYSMMNLVGTLCVYAAICKQEGAVLRFPGCKGAWDGHSDCADADLIAEQQIWAALDPHAKNQAFNVSNGDLFKWKHLWKVLADQFGVECGDYEEGQQLRLQDVMKDKGPVWDKIVAENGLSNTKLEDVGKWWFSDTILWNECRLDSMNKSKEHGFLGFRNSKNCFLYWIHKVKAYNLVPSTYT</sequence>
<protein>
    <recommendedName>
        <fullName evidence="5">(S)-8-oxocitronellyl enol synthase ISY2</fullName>
        <ecNumber evidence="3">1.3.1.122</ecNumber>
    </recommendedName>
    <alternativeName>
        <fullName evidence="4">Iridoid synthase 2</fullName>
        <shortName evidence="4">NmISY2</shortName>
    </alternativeName>
</protein>
<evidence type="ECO:0000250" key="1">
    <source>
        <dbReference type="UniProtKB" id="K7WDL7"/>
    </source>
</evidence>
<evidence type="ECO:0000250" key="2">
    <source>
        <dbReference type="UniProtKB" id="Q9STX2"/>
    </source>
</evidence>
<evidence type="ECO:0000269" key="3">
    <source>
    </source>
</evidence>
<evidence type="ECO:0000303" key="4">
    <source>
    </source>
</evidence>
<evidence type="ECO:0000305" key="5"/>
<evidence type="ECO:0000305" key="6">
    <source>
    </source>
</evidence>
<proteinExistence type="evidence at protein level"/>
<keyword id="KW-0520">NAD</keyword>
<keyword id="KW-0521">NADP</keyword>
<keyword id="KW-0560">Oxidoreductase</keyword>
<feature type="chain" id="PRO_0000449835" description="(S)-8-oxocitronellyl enol synthase ISY2">
    <location>
        <begin position="1"/>
        <end position="396"/>
    </location>
</feature>
<feature type="active site" evidence="6">
    <location>
        <position position="182"/>
    </location>
</feature>
<feature type="binding site" evidence="1">
    <location>
        <begin position="38"/>
        <end position="40"/>
    </location>
    <ligand>
        <name>NADP(+)</name>
        <dbReference type="ChEBI" id="CHEBI:58349"/>
    </ligand>
</feature>
<feature type="binding site" evidence="1">
    <location>
        <begin position="66"/>
        <end position="67"/>
    </location>
    <ligand>
        <name>NADP(+)</name>
        <dbReference type="ChEBI" id="CHEBI:58349"/>
    </ligand>
</feature>
<feature type="binding site" evidence="1">
    <location>
        <begin position="84"/>
        <end position="85"/>
    </location>
    <ligand>
        <name>NADP(+)</name>
        <dbReference type="ChEBI" id="CHEBI:58349"/>
    </ligand>
</feature>
<feature type="binding site" evidence="1">
    <location>
        <begin position="108"/>
        <end position="109"/>
    </location>
    <ligand>
        <name>NADP(+)</name>
        <dbReference type="ChEBI" id="CHEBI:58349"/>
    </ligand>
</feature>
<feature type="binding site" evidence="1">
    <location>
        <position position="146"/>
    </location>
    <ligand>
        <name>NADP(+)</name>
        <dbReference type="ChEBI" id="CHEBI:58349"/>
    </ligand>
</feature>
<feature type="binding site" evidence="1">
    <location>
        <position position="182"/>
    </location>
    <ligand>
        <name>NADP(+)</name>
        <dbReference type="ChEBI" id="CHEBI:58349"/>
    </ligand>
</feature>
<feature type="binding site" evidence="2">
    <location>
        <position position="209"/>
    </location>
    <ligand>
        <name>NADP(+)</name>
        <dbReference type="ChEBI" id="CHEBI:58349"/>
    </ligand>
</feature>
<feature type="binding site" evidence="1">
    <location>
        <begin position="216"/>
        <end position="218"/>
    </location>
    <ligand>
        <name>NADP(+)</name>
        <dbReference type="ChEBI" id="CHEBI:58349"/>
    </ligand>
</feature>
<dbReference type="EC" id="1.3.1.122" evidence="3"/>
<dbReference type="EMBL" id="KY882236">
    <property type="protein sequence ID" value="ASM62112.1"/>
    <property type="molecule type" value="mRNA"/>
</dbReference>
<dbReference type="SMR" id="A0A221J5X6"/>
<dbReference type="BioCyc" id="MetaCyc:MONOMER-20870"/>
<dbReference type="GO" id="GO:0016627">
    <property type="term" value="F:oxidoreductase activity, acting on the CH-CH group of donors"/>
    <property type="evidence" value="ECO:0007669"/>
    <property type="project" value="UniProtKB-ARBA"/>
</dbReference>
<dbReference type="CDD" id="cd08948">
    <property type="entry name" value="5beta-POR_like_SDR_a"/>
    <property type="match status" value="1"/>
</dbReference>
<dbReference type="FunFam" id="3.40.50.720:FF:000808">
    <property type="entry name" value="Iridoid synthase"/>
    <property type="match status" value="1"/>
</dbReference>
<dbReference type="Gene3D" id="3.40.50.720">
    <property type="entry name" value="NAD(P)-binding Rossmann-like Domain"/>
    <property type="match status" value="1"/>
</dbReference>
<dbReference type="InterPro" id="IPR036291">
    <property type="entry name" value="NAD(P)-bd_dom_sf"/>
</dbReference>
<dbReference type="InterPro" id="IPR055222">
    <property type="entry name" value="PRISE-like_Rossmann-fold"/>
</dbReference>
<dbReference type="PANTHER" id="PTHR32487">
    <property type="entry name" value="3-OXO-DELTA(4,5)-STEROID 5-BETA-REDUCTASE"/>
    <property type="match status" value="1"/>
</dbReference>
<dbReference type="PANTHER" id="PTHR32487:SF0">
    <property type="entry name" value="3-OXO-DELTA(4,5)-STEROID 5-BETA-REDUCTASE"/>
    <property type="match status" value="1"/>
</dbReference>
<dbReference type="Pfam" id="PF22917">
    <property type="entry name" value="PRISE"/>
    <property type="match status" value="1"/>
</dbReference>
<dbReference type="SUPFAM" id="SSF51735">
    <property type="entry name" value="NAD(P)-binding Rossmann-fold domains"/>
    <property type="match status" value="1"/>
</dbReference>
<organism>
    <name type="scientific">Nepeta racemosa</name>
    <name type="common">Catmint</name>
    <name type="synonym">Raceme catnip</name>
    <dbReference type="NCBI Taxonomy" id="54731"/>
    <lineage>
        <taxon>Eukaryota</taxon>
        <taxon>Viridiplantae</taxon>
        <taxon>Streptophyta</taxon>
        <taxon>Embryophyta</taxon>
        <taxon>Tracheophyta</taxon>
        <taxon>Spermatophyta</taxon>
        <taxon>Magnoliopsida</taxon>
        <taxon>eudicotyledons</taxon>
        <taxon>Gunneridae</taxon>
        <taxon>Pentapetalae</taxon>
        <taxon>asterids</taxon>
        <taxon>lamiids</taxon>
        <taxon>Lamiales</taxon>
        <taxon>Lamiaceae</taxon>
        <taxon>Nepetoideae</taxon>
        <taxon>Mentheae</taxon>
        <taxon>Nepetinae</taxon>
        <taxon>Nepeta</taxon>
    </lineage>
</organism>
<reference key="1">
    <citation type="journal article" date="2018" name="Phytochemistry">
        <title>Identification of iridoid synthases from Nepeta species: Iridoid cyclization does not determine nepetalactone stereochemistry.</title>
        <authorList>
            <person name="Sherden N.H."/>
            <person name="Lichman B."/>
            <person name="Caputi L."/>
            <person name="Zhao D."/>
            <person name="Kamileen M.O."/>
            <person name="Buell C.R."/>
            <person name="O'Connor S.E."/>
        </authorList>
    </citation>
    <scope>NUCLEOTIDE SEQUENCE [MRNA]</scope>
    <scope>FUNCTION</scope>
    <scope>CATALYTIC ACTIVITY</scope>
    <scope>ACTIVE SITES</scope>
    <scope>BIOPHYSICOCHEMICAL PROPERTIES</scope>
</reference>
<name>ISY2_NEPRA</name>
<gene>
    <name evidence="4" type="primary">ISY2</name>
</gene>